<accession>Q31GP3</accession>
<reference key="1">
    <citation type="journal article" date="2006" name="PLoS Biol.">
        <title>The genome of deep-sea vent chemolithoautotroph Thiomicrospira crunogena XCL-2.</title>
        <authorList>
            <person name="Scott K.M."/>
            <person name="Sievert S.M."/>
            <person name="Abril F.N."/>
            <person name="Ball L.A."/>
            <person name="Barrett C.J."/>
            <person name="Blake R.A."/>
            <person name="Boller A.J."/>
            <person name="Chain P.S.G."/>
            <person name="Clark J.A."/>
            <person name="Davis C.R."/>
            <person name="Detter C."/>
            <person name="Do K.F."/>
            <person name="Dobrinski K.P."/>
            <person name="Faza B.I."/>
            <person name="Fitzpatrick K.A."/>
            <person name="Freyermuth S.K."/>
            <person name="Harmer T.L."/>
            <person name="Hauser L.J."/>
            <person name="Huegler M."/>
            <person name="Kerfeld C.A."/>
            <person name="Klotz M.G."/>
            <person name="Kong W.W."/>
            <person name="Land M."/>
            <person name="Lapidus A."/>
            <person name="Larimer F.W."/>
            <person name="Longo D.L."/>
            <person name="Lucas S."/>
            <person name="Malfatti S.A."/>
            <person name="Massey S.E."/>
            <person name="Martin D.D."/>
            <person name="McCuddin Z."/>
            <person name="Meyer F."/>
            <person name="Moore J.L."/>
            <person name="Ocampo L.H. Jr."/>
            <person name="Paul J.H."/>
            <person name="Paulsen I.T."/>
            <person name="Reep D.K."/>
            <person name="Ren Q."/>
            <person name="Ross R.L."/>
            <person name="Sato P.Y."/>
            <person name="Thomas P."/>
            <person name="Tinkham L.E."/>
            <person name="Zeruth G.T."/>
        </authorList>
    </citation>
    <scope>NUCLEOTIDE SEQUENCE [LARGE SCALE GENOMIC DNA]</scope>
    <source>
        <strain>DSM 25203 / XCL-2</strain>
    </source>
</reference>
<feature type="chain" id="PRO_0000377359" description="tRNA dimethylallyltransferase">
    <location>
        <begin position="1"/>
        <end position="324"/>
    </location>
</feature>
<feature type="region of interest" description="Interaction with substrate tRNA" evidence="1">
    <location>
        <begin position="45"/>
        <end position="48"/>
    </location>
</feature>
<feature type="region of interest" description="Interaction with substrate tRNA" evidence="1">
    <location>
        <begin position="168"/>
        <end position="172"/>
    </location>
</feature>
<feature type="region of interest" description="Interaction with substrate tRNA" evidence="1">
    <location>
        <begin position="284"/>
        <end position="291"/>
    </location>
</feature>
<feature type="binding site" evidence="1">
    <location>
        <begin position="20"/>
        <end position="27"/>
    </location>
    <ligand>
        <name>ATP</name>
        <dbReference type="ChEBI" id="CHEBI:30616"/>
    </ligand>
</feature>
<feature type="binding site" evidence="1">
    <location>
        <begin position="22"/>
        <end position="27"/>
    </location>
    <ligand>
        <name>substrate</name>
    </ligand>
</feature>
<feature type="site" description="Interaction with substrate tRNA" evidence="1">
    <location>
        <position position="111"/>
    </location>
</feature>
<feature type="site" description="Interaction with substrate tRNA" evidence="1">
    <location>
        <position position="133"/>
    </location>
</feature>
<proteinExistence type="inferred from homology"/>
<protein>
    <recommendedName>
        <fullName evidence="1">tRNA dimethylallyltransferase</fullName>
        <ecNumber evidence="1">2.5.1.75</ecNumber>
    </recommendedName>
    <alternativeName>
        <fullName evidence="1">Dimethylallyl diphosphate:tRNA dimethylallyltransferase</fullName>
        <shortName evidence="1">DMAPP:tRNA dimethylallyltransferase</shortName>
        <shortName evidence="1">DMATase</shortName>
    </alternativeName>
    <alternativeName>
        <fullName evidence="1">Isopentenyl-diphosphate:tRNA isopentenyltransferase</fullName>
        <shortName evidence="1">IPP transferase</shortName>
        <shortName evidence="1">IPPT</shortName>
        <shortName evidence="1">IPTase</shortName>
    </alternativeName>
</protein>
<sequence>MQSMNVAQLIEQKICLAIMGPTASGKSGLTMALAKHLPIEIISVDSALIYRGMDIGTAKPTLDEQVAVPHHLIDILDPTESYSAADFVEDVHELVKEIFARGNLPVLAGGTMMYFNALQQGMAKLPSADEAIRAKIHQAWQANPAAVHAQLKQVDPEAAERIHQNDPQRLIRALEVYEMTGKPLTQLQREGQQEGLTEFKLAKVALIPEDRKKLHEQIAVRFHEMLNNGFLKEAEKVFSLDGLSADLPAIRSVGYRQAWLFFAQEYDYDTFVEKSIVATRQLAKRQITWLRKEQDLLVLDPFKTNVDDRVEAVLDYLSALTKNA</sequence>
<comment type="function">
    <text evidence="1">Catalyzes the transfer of a dimethylallyl group onto the adenine at position 37 in tRNAs that read codons beginning with uridine, leading to the formation of N6-(dimethylallyl)adenosine (i(6)A).</text>
</comment>
<comment type="catalytic activity">
    <reaction evidence="1">
        <text>adenosine(37) in tRNA + dimethylallyl diphosphate = N(6)-dimethylallyladenosine(37) in tRNA + diphosphate</text>
        <dbReference type="Rhea" id="RHEA:26482"/>
        <dbReference type="Rhea" id="RHEA-COMP:10162"/>
        <dbReference type="Rhea" id="RHEA-COMP:10375"/>
        <dbReference type="ChEBI" id="CHEBI:33019"/>
        <dbReference type="ChEBI" id="CHEBI:57623"/>
        <dbReference type="ChEBI" id="CHEBI:74411"/>
        <dbReference type="ChEBI" id="CHEBI:74415"/>
        <dbReference type="EC" id="2.5.1.75"/>
    </reaction>
</comment>
<comment type="cofactor">
    <cofactor evidence="1">
        <name>Mg(2+)</name>
        <dbReference type="ChEBI" id="CHEBI:18420"/>
    </cofactor>
</comment>
<comment type="subunit">
    <text evidence="1">Monomer.</text>
</comment>
<comment type="similarity">
    <text evidence="1">Belongs to the IPP transferase family.</text>
</comment>
<dbReference type="EC" id="2.5.1.75" evidence="1"/>
<dbReference type="EMBL" id="CP000109">
    <property type="protein sequence ID" value="ABB41680.1"/>
    <property type="molecule type" value="Genomic_DNA"/>
</dbReference>
<dbReference type="SMR" id="Q31GP3"/>
<dbReference type="STRING" id="317025.Tcr_1085"/>
<dbReference type="KEGG" id="tcx:Tcr_1085"/>
<dbReference type="eggNOG" id="COG0324">
    <property type="taxonomic scope" value="Bacteria"/>
</dbReference>
<dbReference type="HOGENOM" id="CLU_032616_0_0_6"/>
<dbReference type="OrthoDB" id="9776390at2"/>
<dbReference type="GO" id="GO:0005524">
    <property type="term" value="F:ATP binding"/>
    <property type="evidence" value="ECO:0007669"/>
    <property type="project" value="UniProtKB-UniRule"/>
</dbReference>
<dbReference type="GO" id="GO:0052381">
    <property type="term" value="F:tRNA dimethylallyltransferase activity"/>
    <property type="evidence" value="ECO:0007669"/>
    <property type="project" value="UniProtKB-UniRule"/>
</dbReference>
<dbReference type="GO" id="GO:0006400">
    <property type="term" value="P:tRNA modification"/>
    <property type="evidence" value="ECO:0007669"/>
    <property type="project" value="TreeGrafter"/>
</dbReference>
<dbReference type="FunFam" id="1.10.20.140:FF:000001">
    <property type="entry name" value="tRNA dimethylallyltransferase"/>
    <property type="match status" value="1"/>
</dbReference>
<dbReference type="Gene3D" id="1.10.20.140">
    <property type="match status" value="1"/>
</dbReference>
<dbReference type="Gene3D" id="3.40.50.300">
    <property type="entry name" value="P-loop containing nucleotide triphosphate hydrolases"/>
    <property type="match status" value="1"/>
</dbReference>
<dbReference type="HAMAP" id="MF_00185">
    <property type="entry name" value="IPP_trans"/>
    <property type="match status" value="1"/>
</dbReference>
<dbReference type="InterPro" id="IPR039657">
    <property type="entry name" value="Dimethylallyltransferase"/>
</dbReference>
<dbReference type="InterPro" id="IPR018022">
    <property type="entry name" value="IPT"/>
</dbReference>
<dbReference type="InterPro" id="IPR027417">
    <property type="entry name" value="P-loop_NTPase"/>
</dbReference>
<dbReference type="NCBIfam" id="TIGR00174">
    <property type="entry name" value="miaA"/>
    <property type="match status" value="1"/>
</dbReference>
<dbReference type="PANTHER" id="PTHR11088">
    <property type="entry name" value="TRNA DIMETHYLALLYLTRANSFERASE"/>
    <property type="match status" value="1"/>
</dbReference>
<dbReference type="PANTHER" id="PTHR11088:SF60">
    <property type="entry name" value="TRNA DIMETHYLALLYLTRANSFERASE"/>
    <property type="match status" value="1"/>
</dbReference>
<dbReference type="Pfam" id="PF01715">
    <property type="entry name" value="IPPT"/>
    <property type="match status" value="1"/>
</dbReference>
<dbReference type="SUPFAM" id="SSF52540">
    <property type="entry name" value="P-loop containing nucleoside triphosphate hydrolases"/>
    <property type="match status" value="2"/>
</dbReference>
<name>MIAA_HYDCU</name>
<organism>
    <name type="scientific">Hydrogenovibrio crunogenus (strain DSM 25203 / XCL-2)</name>
    <name type="common">Thiomicrospira crunogena</name>
    <dbReference type="NCBI Taxonomy" id="317025"/>
    <lineage>
        <taxon>Bacteria</taxon>
        <taxon>Pseudomonadati</taxon>
        <taxon>Pseudomonadota</taxon>
        <taxon>Gammaproteobacteria</taxon>
        <taxon>Thiotrichales</taxon>
        <taxon>Piscirickettsiaceae</taxon>
        <taxon>Hydrogenovibrio</taxon>
    </lineage>
</organism>
<evidence type="ECO:0000255" key="1">
    <source>
        <dbReference type="HAMAP-Rule" id="MF_00185"/>
    </source>
</evidence>
<keyword id="KW-0067">ATP-binding</keyword>
<keyword id="KW-0460">Magnesium</keyword>
<keyword id="KW-0547">Nucleotide-binding</keyword>
<keyword id="KW-0808">Transferase</keyword>
<keyword id="KW-0819">tRNA processing</keyword>
<gene>
    <name evidence="1" type="primary">miaA</name>
    <name type="ordered locus">Tcr_1085</name>
</gene>